<accession>P19826</accession>
<accession>Q8MPS2</accession>
<accession>Q9BI31</accession>
<accession>Q9BI32</accession>
<accession>V6CJ36</accession>
<accession>V6CK82</accession>
<accession>V6CLG2</accession>
<accession>V6CLK1</accession>
<accession>V6CLL2</accession>
<feature type="chain" id="PRO_0000064258" description="Vinculin">
    <location>
        <begin position="1"/>
        <end position="1090"/>
    </location>
</feature>
<feature type="repeat" description="1" evidence="2">
    <location>
        <begin position="339"/>
        <end position="446"/>
    </location>
</feature>
<feature type="repeat" description="2" evidence="2">
    <location>
        <begin position="455"/>
        <end position="561"/>
    </location>
</feature>
<feature type="region of interest" description="2 X repeats" evidence="2">
    <location>
        <begin position="339"/>
        <end position="561"/>
    </location>
</feature>
<feature type="region of interest" description="Disordered" evidence="3">
    <location>
        <begin position="811"/>
        <end position="842"/>
    </location>
</feature>
<feature type="region of interest" description="Disordered" evidence="3">
    <location>
        <begin position="864"/>
        <end position="895"/>
    </location>
</feature>
<feature type="compositionally biased region" description="Polar residues" evidence="3">
    <location>
        <begin position="817"/>
        <end position="830"/>
    </location>
</feature>
<feature type="compositionally biased region" description="Pro residues" evidence="3">
    <location>
        <begin position="866"/>
        <end position="887"/>
    </location>
</feature>
<feature type="splice variant" id="VSP_060227" description="In isoform g and isoform h." evidence="8">
    <location>
        <begin position="1"/>
        <end position="858"/>
    </location>
</feature>
<feature type="splice variant" id="VSP_060228" description="In isoform b and isoform f." evidence="8">
    <original>VFHTKTIENILEPVAQQLHYVLAMAEKNATSVDEVRHLGTSMPNLDRFASRSALALSRASSRRSIPEYITPDTVRHVVNDDDCPVCQLMMPRGKDGCVSRLVILHEEANDGNAMPDLTGPVGMVSRAVGNLIQVGYDTCDHSDDRILQQDMPPALQRVEGSSKLLEESSYSLKHDPYSVPARKKLIDGARGILQGTSALLLCFDESEVRKIIRVCRKANDYVAVSEVIESMADLQQFVKDISPVLHDVTNDVNLRQQELTHQVHREILIRCMDSIKVIAPILICSMKTSIELGTPHPRQGHAEAIANRNFMSQRMTEEMNEIIRVLQLTTYDEDEWDADNVTVMRKALSAAKSLLTAALDWLADPHARSGAVGEKAIRRICEYADRISARALPEDAQSIKRSIFEITSFTDELCNLRNNGQPDRENLAAQTARRLKDLVGSQNSSGLMGDALQNAQRHGGANPAHTAAGRLEQALRWLDNPGLDDGGLGLQALRLLTADARKLADRLNPQDRNRLLGLCSDIDRLAAQLADLERRGLGNSPEAHQIRNQLKNALRDLGDFMRRVLTDRVVDDFADITTPLKQFVEAVHADPYDPNREQNFVDKSQRLTDHSQSMTTTARLVASCGPSKSKKTVEAILDTAEKVEQLTPQLVNAGRVRLHNPGSEQHFENIHKQYADALHRLRSHVDDAIDTGEFVRASETAMRRYTNHCEGAINGADAHGLVNNSSQIARLGNRVLMTAQNEADNSEEPSFVSRVRNAADQLHNA</original>
    <variation>INRYSSSVSDHYDSSDEYDNYSEQNYEYVYKTRLVPFNPQVLIT</variation>
    <location>
        <begin position="3"/>
        <end position="767"/>
    </location>
</feature>
<feature type="splice variant" id="VSP_060229" description="In isoform a and isoform c." evidence="8">
    <location>
        <begin position="20"/>
        <end position="99"/>
    </location>
</feature>
<feature type="splice variant" id="VSP_060230" description="In isoform c, isoform e, isoform f and isoform g." evidence="8">
    <original>NVIGPYGQPVEG</original>
    <variation>S</variation>
    <location>
        <begin position="1024"/>
        <end position="1035"/>
    </location>
</feature>
<protein>
    <recommendedName>
        <fullName>Vinculin</fullName>
    </recommendedName>
    <alternativeName>
        <fullName>P107B</fullName>
    </alternativeName>
</protein>
<organism>
    <name type="scientific">Caenorhabditis elegans</name>
    <dbReference type="NCBI Taxonomy" id="6239"/>
    <lineage>
        <taxon>Eukaryota</taxon>
        <taxon>Metazoa</taxon>
        <taxon>Ecdysozoa</taxon>
        <taxon>Nematoda</taxon>
        <taxon>Chromadorea</taxon>
        <taxon>Rhabditida</taxon>
        <taxon>Rhabditina</taxon>
        <taxon>Rhabditomorpha</taxon>
        <taxon>Rhabditoidea</taxon>
        <taxon>Rhabditidae</taxon>
        <taxon>Peloderinae</taxon>
        <taxon>Caenorhabditis</taxon>
    </lineage>
</organism>
<name>VINC_CAEEL</name>
<evidence type="ECO:0000250" key="1">
    <source>
        <dbReference type="UniProtKB" id="P12003"/>
    </source>
</evidence>
<evidence type="ECO:0000255" key="2"/>
<evidence type="ECO:0000256" key="3">
    <source>
        <dbReference type="SAM" id="MobiDB-lite"/>
    </source>
</evidence>
<evidence type="ECO:0000269" key="4">
    <source>
    </source>
</evidence>
<evidence type="ECO:0000269" key="5">
    <source>
    </source>
</evidence>
<evidence type="ECO:0000269" key="6">
    <source>
    </source>
</evidence>
<evidence type="ECO:0000269" key="7">
    <source>
    </source>
</evidence>
<evidence type="ECO:0000305" key="8"/>
<evidence type="ECO:0000312" key="9">
    <source>
        <dbReference type="WormBase" id="ZC477.9a"/>
    </source>
</evidence>
<evidence type="ECO:0000312" key="10">
    <source>
        <dbReference type="WormBase" id="ZC477.9b"/>
    </source>
</evidence>
<evidence type="ECO:0000312" key="11">
    <source>
        <dbReference type="WormBase" id="ZC477.9c"/>
    </source>
</evidence>
<evidence type="ECO:0000312" key="12">
    <source>
        <dbReference type="WormBase" id="ZC477.9d"/>
    </source>
</evidence>
<evidence type="ECO:0000312" key="13">
    <source>
        <dbReference type="WormBase" id="ZC477.9e"/>
    </source>
</evidence>
<evidence type="ECO:0000312" key="14">
    <source>
        <dbReference type="WormBase" id="ZC477.9f"/>
    </source>
</evidence>
<evidence type="ECO:0000312" key="15">
    <source>
        <dbReference type="WormBase" id="ZC477.9g"/>
    </source>
</evidence>
<evidence type="ECO:0000312" key="16">
    <source>
        <dbReference type="WormBase" id="ZC477.9h"/>
    </source>
</evidence>
<keyword id="KW-0009">Actin-binding</keyword>
<keyword id="KW-0025">Alternative splicing</keyword>
<keyword id="KW-0130">Cell adhesion</keyword>
<keyword id="KW-0965">Cell junction</keyword>
<keyword id="KW-1003">Cell membrane</keyword>
<keyword id="KW-0963">Cytoplasm</keyword>
<keyword id="KW-0206">Cytoskeleton</keyword>
<keyword id="KW-0472">Membrane</keyword>
<keyword id="KW-1185">Reference proteome</keyword>
<keyword id="KW-0677">Repeat</keyword>
<sequence length="1090" mass="120779">MPVFHTKTIENILEPVAQQLHYVLAMAEKNATSVDEVRHLGTSMPNLDRFASRSALALSRASSRRSIPEYITPDTVRHVVNDDDCPVCQLMMPRGKDGCVSRLVILHEEANDGNAMPDLTGPVGMVSRAVGNLIQVGYDTCDHSDDRILQQDMPPALQRVEGSSKLLEESSYSLKHDPYSVPARKKLIDGARGILQGTSALLLCFDESEVRKIIRVCRKANDYVAVSEVIESMADLQQFVKDISPVLHDVTNDVNLRQQELTHQVHREILIRCMDSIKVIAPILICSMKTSIELGTPHPRQGHAEAIANRNFMSQRMTEEMNEIIRVLQLTTYDEDEWDADNVTVMRKALSAAKSLLTAALDWLADPHARSGAVGEKAIRRICEYADRISARALPEDAQSIKRSIFEITSFTDELCNLRNNGQPDRENLAAQTARRLKDLVGSQNSSGLMGDALQNAQRHGGANPAHTAAGRLEQALRWLDNPGLDDGGLGLQALRLLTADARKLADRLNPQDRNRLLGLCSDIDRLAAQLADLERRGLGNSPEAHQIRNQLKNALRDLGDFMRRVLTDRVVDDFADITTPLKQFVEAVHADPYDPNREQNFVDKSQRLTDHSQSMTTTARLVASCGPSKSKKTVEAILDTAEKVEQLTPQLVNAGRVRLHNPGSEQHFENIHKQYADALHRLRSHVDDAIDTGEFVRASETAMRRYTNHCEGAINGADAHGLVNNSSQIARLGNRVLMTAQNEADNSEEPSFVSRVRNAADQLHNAIPPMVNNAKQIAQNPHDQYAAQNWRGTNDHLLNSVRAVGDAITGVPMSNGRHSSYQESISRASPYNPPPPSSQVIRSVNASPPTAPIIHNKMIIREDIPAPPRPPPPVELSPPPRPPPPPEYDEEEETRAFWERYPLPQASHQPMLAAAHNLHNELKQWSSQENDIVAAAKRMAILMARLSQLVRGEGGTKKDLINCSKAIADSSEEVTRLAVQLARLCTDIKMRTALLQVSERIPTIATQLKVLSTVKATMLGSANVIGPYGQPVEGSEEDDEAMQQLVHNAQNLMQSVKDVVRAAEAASIKIRTNSGLRLRWLRKPMWSNF</sequence>
<comment type="function">
    <text evidence="4 5 7">Involved in cell adhesion (PubMed:20385102). May be involved in the attachment of the actin-based microfilaments to the plasma membrane (PubMed:17326220, PubMed:31411810). Involved in ovulation (PubMed:17326220).</text>
</comment>
<comment type="subunit">
    <text evidence="6">May interact with sorb-1.</text>
</comment>
<comment type="subcellular location">
    <subcellularLocation>
        <location evidence="1">Cytoplasm</location>
        <location evidence="1">Cytoskeleton</location>
    </subcellularLocation>
    <subcellularLocation>
        <location evidence="1">Cell junction</location>
        <location evidence="1">Adherens junction</location>
    </subcellularLocation>
    <subcellularLocation>
        <location evidence="5 6">Cell membrane</location>
        <topology evidence="8">Peripheral membrane protein</topology>
        <orientation evidence="8">Cytoplasmic side</orientation>
    </subcellularLocation>
    <subcellularLocation>
        <location evidence="5">Cell junction</location>
    </subcellularLocation>
    <subcellularLocation>
        <location evidence="5">Cell junction</location>
        <location evidence="5">Focal adhesion</location>
    </subcellularLocation>
    <text evidence="1 4 5 6">Cytoplasmic face of adhesion plaques (By similarity). In myoepithelial sheath cells, colocalizes in dense body-like structures with actin thin filaments and pat-3 (PubMed:17326220). In body wall muscles, localizes to integrin adhesion structures (M line and dense bodies) (PubMed:20385102). Requires unc-95 for the localization to nascent muscle attachments during embryogenesis (PubMed:20385102). Co-localizes with sorb-1 at dense bodies (PubMed:28978740).</text>
</comment>
<comment type="alternative products">
    <event type="alternative splicing"/>
    <isoform>
        <id>P19826-1</id>
        <name evidence="12">d</name>
        <sequence type="displayed"/>
    </isoform>
    <isoform>
        <id>P19826-2</id>
        <name evidence="9">a</name>
        <sequence type="described" ref="VSP_060229"/>
    </isoform>
    <isoform>
        <id>P19826-3</id>
        <name evidence="10">b</name>
        <sequence type="described" ref="VSP_060228"/>
    </isoform>
    <isoform>
        <id>P19826-4</id>
        <name evidence="11">c</name>
        <sequence type="described" ref="VSP_060229 VSP_060230"/>
    </isoform>
    <isoform>
        <id>P19826-5</id>
        <name evidence="13">e</name>
        <sequence type="described" ref="VSP_060230"/>
    </isoform>
    <isoform>
        <id>P19826-6</id>
        <name evidence="14">f</name>
        <sequence type="described" ref="VSP_060228 VSP_060230"/>
    </isoform>
    <isoform>
        <id>P19826-7</id>
        <name evidence="15">g</name>
        <sequence type="described" ref="VSP_060227 VSP_060230"/>
    </isoform>
    <isoform>
        <id>P19826-8</id>
        <name evidence="16">h</name>
        <sequence type="described" ref="VSP_060227"/>
    </isoform>
</comment>
<comment type="tissue specificity">
    <text evidence="4 5">Expressed in gonadal sheath cells and the spermatheca (PubMed:17326220). Expressed in body wall muscles (PubMed:20385102).</text>
</comment>
<comment type="developmental stage">
    <text evidence="5">Expressed in adult animals.</text>
</comment>
<comment type="disruption phenotype">
    <text evidence="7">RNAi-mediated knockdown causes an accumulation in the proximal gonad of endomitotic mature oocytes in 30 percent of animals (PubMed:17326220). RNAi-mediated knockdown disrupts the assembly of actin into myofibrils, and furthermore reduces the co-localization of ketn-1 and actin in early embryos (PubMed:31411810).</text>
</comment>
<comment type="similarity">
    <text evidence="8">Belongs to the vinculin/alpha-catenin family.</text>
</comment>
<dbReference type="EMBL" id="J04804">
    <property type="protein sequence ID" value="AAA28002.1"/>
    <property type="molecule type" value="Genomic_DNA"/>
</dbReference>
<dbReference type="EMBL" id="BX284604">
    <property type="protein sequence ID" value="CCD66633.1"/>
    <property type="molecule type" value="Genomic_DNA"/>
</dbReference>
<dbReference type="EMBL" id="BX284604">
    <property type="protein sequence ID" value="CCD66634.1"/>
    <property type="molecule type" value="Genomic_DNA"/>
</dbReference>
<dbReference type="EMBL" id="BX284604">
    <property type="protein sequence ID" value="CCD66635.1"/>
    <property type="molecule type" value="Genomic_DNA"/>
</dbReference>
<dbReference type="EMBL" id="BX284604">
    <property type="protein sequence ID" value="CDK13445.1"/>
    <property type="molecule type" value="Genomic_DNA"/>
</dbReference>
<dbReference type="EMBL" id="BX284604">
    <property type="protein sequence ID" value="CDK13446.1"/>
    <property type="molecule type" value="Genomic_DNA"/>
</dbReference>
<dbReference type="EMBL" id="BX284604">
    <property type="protein sequence ID" value="CDK13447.1"/>
    <property type="molecule type" value="Genomic_DNA"/>
</dbReference>
<dbReference type="EMBL" id="BX284604">
    <property type="protein sequence ID" value="CDK13448.1"/>
    <property type="molecule type" value="Genomic_DNA"/>
</dbReference>
<dbReference type="EMBL" id="BX284604">
    <property type="protein sequence ID" value="CDK13449.1"/>
    <property type="molecule type" value="Genomic_DNA"/>
</dbReference>
<dbReference type="PIR" id="A33509">
    <property type="entry name" value="A33509"/>
</dbReference>
<dbReference type="RefSeq" id="NP_001293743.1">
    <molecule id="P19826-1"/>
    <property type="nucleotide sequence ID" value="NM_001306814.4"/>
</dbReference>
<dbReference type="RefSeq" id="NP_001293744.1">
    <molecule id="P19826-5"/>
    <property type="nucleotide sequence ID" value="NM_001306815.3"/>
</dbReference>
<dbReference type="RefSeq" id="NP_001293745.1">
    <molecule id="P19826-6"/>
    <property type="nucleotide sequence ID" value="NM_001306816.3"/>
</dbReference>
<dbReference type="RefSeq" id="NP_001293746.1">
    <property type="nucleotide sequence ID" value="NM_001306817.1"/>
</dbReference>
<dbReference type="RefSeq" id="NP_001293747.1">
    <property type="nucleotide sequence ID" value="NM_001306818.1"/>
</dbReference>
<dbReference type="RefSeq" id="NP_001368387.1">
    <molecule id="P19826-7"/>
    <property type="nucleotide sequence ID" value="NM_001380304.1"/>
</dbReference>
<dbReference type="RefSeq" id="NP_001368388.1">
    <molecule id="P19826-8"/>
    <property type="nucleotide sequence ID" value="NM_001380305.1"/>
</dbReference>
<dbReference type="RefSeq" id="NP_501104.2">
    <molecule id="P19826-2"/>
    <property type="nucleotide sequence ID" value="NM_068703.5"/>
</dbReference>
<dbReference type="RefSeq" id="NP_501105.2">
    <molecule id="P19826-3"/>
    <property type="nucleotide sequence ID" value="NM_068704.5"/>
</dbReference>
<dbReference type="RefSeq" id="NP_741437.1">
    <molecule id="P19826-4"/>
    <property type="nucleotide sequence ID" value="NM_171374.6"/>
</dbReference>
<dbReference type="SMR" id="P19826"/>
<dbReference type="BioGRID" id="42601">
    <property type="interactions" value="17"/>
</dbReference>
<dbReference type="FunCoup" id="P19826">
    <property type="interactions" value="1265"/>
</dbReference>
<dbReference type="IntAct" id="P19826">
    <property type="interactions" value="3"/>
</dbReference>
<dbReference type="STRING" id="6239.ZC477.9d.1"/>
<dbReference type="iPTMnet" id="P19826"/>
<dbReference type="PaxDb" id="6239-ZC477.9a"/>
<dbReference type="PeptideAtlas" id="P19826"/>
<dbReference type="EnsemblMetazoa" id="ZC477.9a.1">
    <molecule id="P19826-2"/>
    <property type="protein sequence ID" value="ZC477.9a.1"/>
    <property type="gene ID" value="WBGene00000942"/>
</dbReference>
<dbReference type="EnsemblMetazoa" id="ZC477.9b.1">
    <molecule id="P19826-3"/>
    <property type="protein sequence ID" value="ZC477.9b.1"/>
    <property type="gene ID" value="WBGene00000942"/>
</dbReference>
<dbReference type="EnsemblMetazoa" id="ZC477.9c.1">
    <molecule id="P19826-4"/>
    <property type="protein sequence ID" value="ZC477.9c.1"/>
    <property type="gene ID" value="WBGene00000942"/>
</dbReference>
<dbReference type="EnsemblMetazoa" id="ZC477.9d.1">
    <molecule id="P19826-1"/>
    <property type="protein sequence ID" value="ZC477.9d.1"/>
    <property type="gene ID" value="WBGene00000942"/>
</dbReference>
<dbReference type="EnsemblMetazoa" id="ZC477.9e.1">
    <molecule id="P19826-5"/>
    <property type="protein sequence ID" value="ZC477.9e.1"/>
    <property type="gene ID" value="WBGene00000942"/>
</dbReference>
<dbReference type="EnsemblMetazoa" id="ZC477.9f.1">
    <molecule id="P19826-6"/>
    <property type="protein sequence ID" value="ZC477.9f.1"/>
    <property type="gene ID" value="WBGene00000942"/>
</dbReference>
<dbReference type="EnsemblMetazoa" id="ZC477.9g.1">
    <molecule id="P19826-7"/>
    <property type="protein sequence ID" value="ZC477.9g.1"/>
    <property type="gene ID" value="WBGene00000942"/>
</dbReference>
<dbReference type="EnsemblMetazoa" id="ZC477.9h.1">
    <molecule id="P19826-8"/>
    <property type="protein sequence ID" value="ZC477.9h.1"/>
    <property type="gene ID" value="WBGene00000942"/>
</dbReference>
<dbReference type="GeneID" id="177482"/>
<dbReference type="KEGG" id="cel:CELE_ZC477.9"/>
<dbReference type="UCSC" id="ZC477.9b">
    <property type="organism name" value="c. elegans"/>
</dbReference>
<dbReference type="AGR" id="WB:WBGene00000942"/>
<dbReference type="CTD" id="177482"/>
<dbReference type="WormBase" id="ZC477.9a">
    <molecule id="P19826-2"/>
    <property type="protein sequence ID" value="CE31396"/>
    <property type="gene ID" value="WBGene00000942"/>
    <property type="gene designation" value="deb-1"/>
</dbReference>
<dbReference type="WormBase" id="ZC477.9b">
    <molecule id="P19826-3"/>
    <property type="protein sequence ID" value="CE31397"/>
    <property type="gene ID" value="WBGene00000942"/>
    <property type="gene designation" value="deb-1"/>
</dbReference>
<dbReference type="WormBase" id="ZC477.9c">
    <molecule id="P19826-4"/>
    <property type="protein sequence ID" value="CE31398"/>
    <property type="gene ID" value="WBGene00000942"/>
    <property type="gene designation" value="deb-1"/>
</dbReference>
<dbReference type="WormBase" id="ZC477.9d">
    <molecule id="P19826-1"/>
    <property type="protein sequence ID" value="CE49192"/>
    <property type="gene ID" value="WBGene00000942"/>
    <property type="gene designation" value="deb-1"/>
</dbReference>
<dbReference type="WormBase" id="ZC477.9e">
    <molecule id="P19826-5"/>
    <property type="protein sequence ID" value="CE49210"/>
    <property type="gene ID" value="WBGene00000942"/>
    <property type="gene designation" value="deb-1"/>
</dbReference>
<dbReference type="WormBase" id="ZC477.9f">
    <molecule id="P19826-6"/>
    <property type="protein sequence ID" value="CE49354"/>
    <property type="gene ID" value="WBGene00000942"/>
    <property type="gene designation" value="deb-1"/>
</dbReference>
<dbReference type="WormBase" id="ZC477.9g">
    <molecule id="P19826-7"/>
    <property type="protein sequence ID" value="CE49463"/>
    <property type="gene ID" value="WBGene00000942"/>
    <property type="gene designation" value="deb-1"/>
</dbReference>
<dbReference type="WormBase" id="ZC477.9h">
    <molecule id="P19826-8"/>
    <property type="protein sequence ID" value="CE49419"/>
    <property type="gene ID" value="WBGene00000942"/>
    <property type="gene designation" value="deb-1"/>
</dbReference>
<dbReference type="eggNOG" id="KOG3681">
    <property type="taxonomic scope" value="Eukaryota"/>
</dbReference>
<dbReference type="GeneTree" id="ENSGT01030000234543"/>
<dbReference type="HOGENOM" id="CLU_012338_0_0_1"/>
<dbReference type="InParanoid" id="P19826"/>
<dbReference type="OMA" id="ANNLCEL"/>
<dbReference type="OrthoDB" id="29742at2759"/>
<dbReference type="PhylomeDB" id="P19826"/>
<dbReference type="Reactome" id="R-CEL-114608">
    <property type="pathway name" value="Platelet degranulation"/>
</dbReference>
<dbReference type="Reactome" id="R-CEL-445355">
    <property type="pathway name" value="Smooth Muscle Contraction"/>
</dbReference>
<dbReference type="Reactome" id="R-CEL-5674135">
    <property type="pathway name" value="MAP2K and MAPK activation"/>
</dbReference>
<dbReference type="Reactome" id="R-CEL-6798695">
    <property type="pathway name" value="Neutrophil degranulation"/>
</dbReference>
<dbReference type="SignaLink" id="P19826"/>
<dbReference type="PRO" id="PR:P19826"/>
<dbReference type="Proteomes" id="UP000001940">
    <property type="component" value="Chromosome IV"/>
</dbReference>
<dbReference type="Bgee" id="WBGene00000942">
    <property type="expression patterns" value="Expressed in pharyngeal muscle cell (C elegans) and 3 other cell types or tissues"/>
</dbReference>
<dbReference type="GO" id="GO:0015629">
    <property type="term" value="C:actin cytoskeleton"/>
    <property type="evidence" value="ECO:0007669"/>
    <property type="project" value="InterPro"/>
</dbReference>
<dbReference type="GO" id="GO:0005912">
    <property type="term" value="C:adherens junction"/>
    <property type="evidence" value="ECO:0000318"/>
    <property type="project" value="GO_Central"/>
</dbReference>
<dbReference type="GO" id="GO:0044291">
    <property type="term" value="C:cell-cell contact zone"/>
    <property type="evidence" value="ECO:0000318"/>
    <property type="project" value="GO_Central"/>
</dbReference>
<dbReference type="GO" id="GO:0005737">
    <property type="term" value="C:cytoplasm"/>
    <property type="evidence" value="ECO:0000318"/>
    <property type="project" value="GO_Central"/>
</dbReference>
<dbReference type="GO" id="GO:0005856">
    <property type="term" value="C:cytoskeleton"/>
    <property type="evidence" value="ECO:0000314"/>
    <property type="project" value="UniProtKB"/>
</dbReference>
<dbReference type="GO" id="GO:0097433">
    <property type="term" value="C:dense body"/>
    <property type="evidence" value="ECO:0000314"/>
    <property type="project" value="UniProtKB"/>
</dbReference>
<dbReference type="GO" id="GO:0005925">
    <property type="term" value="C:focal adhesion"/>
    <property type="evidence" value="ECO:0000318"/>
    <property type="project" value="GO_Central"/>
</dbReference>
<dbReference type="GO" id="GO:0005886">
    <property type="term" value="C:plasma membrane"/>
    <property type="evidence" value="ECO:0000314"/>
    <property type="project" value="UniProtKB"/>
</dbReference>
<dbReference type="GO" id="GO:0055120">
    <property type="term" value="C:striated muscle dense body"/>
    <property type="evidence" value="ECO:0000314"/>
    <property type="project" value="UniProtKB"/>
</dbReference>
<dbReference type="GO" id="GO:0051015">
    <property type="term" value="F:actin filament binding"/>
    <property type="evidence" value="ECO:0007669"/>
    <property type="project" value="InterPro"/>
</dbReference>
<dbReference type="GO" id="GO:0045294">
    <property type="term" value="F:alpha-catenin binding"/>
    <property type="evidence" value="ECO:0000318"/>
    <property type="project" value="GO_Central"/>
</dbReference>
<dbReference type="GO" id="GO:0008013">
    <property type="term" value="F:beta-catenin binding"/>
    <property type="evidence" value="ECO:0000318"/>
    <property type="project" value="GO_Central"/>
</dbReference>
<dbReference type="GO" id="GO:0005200">
    <property type="term" value="F:structural constituent of cytoskeleton"/>
    <property type="evidence" value="ECO:0000314"/>
    <property type="project" value="UniProtKB"/>
</dbReference>
<dbReference type="GO" id="GO:0007155">
    <property type="term" value="P:cell adhesion"/>
    <property type="evidence" value="ECO:0000318"/>
    <property type="project" value="GO_Central"/>
</dbReference>
<dbReference type="GO" id="GO:0060279">
    <property type="term" value="P:positive regulation of ovulation"/>
    <property type="evidence" value="ECO:0000315"/>
    <property type="project" value="UniProtKB"/>
</dbReference>
<dbReference type="FunFam" id="1.20.120.810:FF:000005">
    <property type="entry name" value="Protein CBR-DEB-1, isoform b"/>
    <property type="match status" value="1"/>
</dbReference>
<dbReference type="FunFam" id="1.20.120.230:FF:000010">
    <property type="entry name" value="Vinculin a"/>
    <property type="match status" value="1"/>
</dbReference>
<dbReference type="Gene3D" id="1.20.120.230">
    <property type="entry name" value="Alpha-catenin/vinculin-like"/>
    <property type="match status" value="5"/>
</dbReference>
<dbReference type="Gene3D" id="1.20.120.810">
    <property type="entry name" value="Vinculin, Vh2 four-helix bundle"/>
    <property type="match status" value="2"/>
</dbReference>
<dbReference type="InterPro" id="IPR036723">
    <property type="entry name" value="Alpha-catenin/vinculin-like_sf"/>
</dbReference>
<dbReference type="InterPro" id="IPR017997">
    <property type="entry name" value="Vinculin"/>
</dbReference>
<dbReference type="InterPro" id="IPR006077">
    <property type="entry name" value="Vinculin/catenin"/>
</dbReference>
<dbReference type="InterPro" id="IPR000633">
    <property type="entry name" value="Vinculin_CS"/>
</dbReference>
<dbReference type="PANTHER" id="PTHR46180">
    <property type="entry name" value="VINCULIN"/>
    <property type="match status" value="1"/>
</dbReference>
<dbReference type="Pfam" id="PF01044">
    <property type="entry name" value="Vinculin"/>
    <property type="match status" value="1"/>
</dbReference>
<dbReference type="PRINTS" id="PR00806">
    <property type="entry name" value="VINCULIN"/>
</dbReference>
<dbReference type="SUPFAM" id="SSF47220">
    <property type="entry name" value="alpha-catenin/vinculin-like"/>
    <property type="match status" value="6"/>
</dbReference>
<dbReference type="PROSITE" id="PS00663">
    <property type="entry name" value="VINCULIN_1"/>
    <property type="match status" value="1"/>
</dbReference>
<dbReference type="PROSITE" id="PS00664">
    <property type="entry name" value="VINCULIN_2"/>
    <property type="match status" value="2"/>
</dbReference>
<gene>
    <name evidence="12" type="primary">deb-1</name>
    <name evidence="12" type="ORF">ZC477.9</name>
</gene>
<proteinExistence type="evidence at protein level"/>
<reference key="1">
    <citation type="journal article" date="1989" name="J. Biol. Chem.">
        <title>The basal component of the nematode dense-body is vinculin.</title>
        <authorList>
            <person name="Barstead R.J."/>
            <person name="Waterston R.H."/>
        </authorList>
    </citation>
    <scope>NUCLEOTIDE SEQUENCE [GENOMIC DNA]</scope>
    <source>
        <strain>Bristol N2</strain>
    </source>
</reference>
<reference key="2">
    <citation type="journal article" date="1998" name="Science">
        <title>Genome sequence of the nematode C. elegans: a platform for investigating biology.</title>
        <authorList>
            <consortium name="The C. elegans sequencing consortium"/>
        </authorList>
    </citation>
    <scope>NUCLEOTIDE SEQUENCE [LARGE SCALE GENOMIC DNA]</scope>
    <source>
        <strain>Bristol N2</strain>
    </source>
</reference>
<reference key="3">
    <citation type="journal article" date="2007" name="Dev. Dyn.">
        <title>Structural components of the nonstriated contractile apparatuses in the Caenorhabditis elegans gonadal myoepithelial sheath and their essential roles for ovulation.</title>
        <authorList>
            <person name="Ono K."/>
            <person name="Yu R."/>
            <person name="Ono S."/>
        </authorList>
    </citation>
    <scope>FUNCTION</scope>
    <scope>SUBCELLULAR LOCATION</scope>
    <scope>TISSUE SPECIFICITY</scope>
    <scope>DISRUPTION PHENOTYPE</scope>
</reference>
<reference key="4">
    <citation type="journal article" date="2010" name="Biochem. Biophys. Res. Commun.">
        <title>Molting-specific downregulation of C. elegans body-wall muscle attachment sites: the role of RNF-5 E3 ligase.</title>
        <authorList>
            <person name="Zaidel-Bar R."/>
            <person name="Miller S."/>
            <person name="Kaminsky R."/>
            <person name="Broday L."/>
        </authorList>
    </citation>
    <scope>FUNCTION</scope>
    <scope>SUBCELLULAR LOCATION</scope>
    <scope>TISSUE SPECIFICITY</scope>
    <scope>DEVELOPMENTAL STAGE</scope>
</reference>
<reference key="5">
    <citation type="journal article" date="2017" name="Mol. Biol. Cell">
        <title>Caenorhabditis elegans SORB-1 localizes to integrin adhesion sites and is required for organization of sarcomeres and mitochondria in myocytes.</title>
        <authorList>
            <person name="Loveless T."/>
            <person name="Qadota H."/>
            <person name="Benian G.M."/>
            <person name="Hardin J."/>
        </authorList>
    </citation>
    <scope>INTERACTION WITH SORB-1</scope>
    <scope>SUBCELLULAR LOCATION</scope>
</reference>
<reference key="6">
    <citation type="journal article" date="2020" name="FEBS J.">
        <title>Kettin, the large actin-binding protein with multiple immunoglobulin domains, is essential for sarcomeric actin assembly and larval development in Caenorhabditis elegans.</title>
        <authorList>
            <person name="Ono K."/>
            <person name="Qin Z."/>
            <person name="Johnsen R.C."/>
            <person name="Baillie D.L."/>
            <person name="Ono S."/>
        </authorList>
    </citation>
    <scope>FUNCTION</scope>
    <scope>DISRUPTION PHENOTYPE</scope>
</reference>